<organism>
    <name type="scientific">Buchnera aphidicola subsp. Acyrthosiphon pisum (strain APS)</name>
    <name type="common">Acyrthosiphon pisum symbiotic bacterium</name>
    <dbReference type="NCBI Taxonomy" id="107806"/>
    <lineage>
        <taxon>Bacteria</taxon>
        <taxon>Pseudomonadati</taxon>
        <taxon>Pseudomonadota</taxon>
        <taxon>Gammaproteobacteria</taxon>
        <taxon>Enterobacterales</taxon>
        <taxon>Erwiniaceae</taxon>
        <taxon>Buchnera</taxon>
    </lineage>
</organism>
<keyword id="KW-0235">DNA replication</keyword>
<keyword id="KW-0238">DNA-binding</keyword>
<keyword id="KW-0639">Primosome</keyword>
<keyword id="KW-1185">Reference proteome</keyword>
<protein>
    <recommendedName>
        <fullName evidence="1">Replication restart protein DnaT</fullName>
    </recommendedName>
</protein>
<proteinExistence type="inferred from homology"/>
<sequence length="164" mass="19155">MKILISDNISLELFCKNPIKILEKSNKGIIGVLKNKSPIFYVITPYILKKIFDLECNLLDLDKTKQQISKKFSMHPQWTPDKDFIRQAALWGITLTEEILESELASFISYWQAEGCFFHHIQWQQKLARSLQKSRSISYMSQKKRDITYIPTPDQTVPNGFRGK</sequence>
<reference key="1">
    <citation type="journal article" date="2000" name="Nature">
        <title>Genome sequence of the endocellular bacterial symbiont of aphids Buchnera sp. APS.</title>
        <authorList>
            <person name="Shigenobu S."/>
            <person name="Watanabe H."/>
            <person name="Hattori M."/>
            <person name="Sakaki Y."/>
            <person name="Ishikawa H."/>
        </authorList>
    </citation>
    <scope>NUCLEOTIDE SEQUENCE [LARGE SCALE GENOMIC DNA]</scope>
    <source>
        <strain>APS</strain>
    </source>
</reference>
<dbReference type="EMBL" id="BA000003">
    <property type="protein sequence ID" value="BAB12749.1"/>
    <property type="molecule type" value="Genomic_DNA"/>
</dbReference>
<dbReference type="RefSeq" id="NP_239863.1">
    <property type="nucleotide sequence ID" value="NC_002528.1"/>
</dbReference>
<dbReference type="RefSeq" id="WP_009873983.1">
    <property type="nucleotide sequence ID" value="NZ_AP036055.1"/>
</dbReference>
<dbReference type="SMR" id="P57135"/>
<dbReference type="STRING" id="563178.BUAP5A_022"/>
<dbReference type="EnsemblBacteria" id="BAB12749">
    <property type="protein sequence ID" value="BAB12749"/>
    <property type="gene ID" value="BAB12749"/>
</dbReference>
<dbReference type="KEGG" id="buc:BU022"/>
<dbReference type="PATRIC" id="fig|107806.10.peg.34"/>
<dbReference type="eggNOG" id="ENOG502Z8PW">
    <property type="taxonomic scope" value="Bacteria"/>
</dbReference>
<dbReference type="HOGENOM" id="CLU_1501592_0_0_6"/>
<dbReference type="Proteomes" id="UP000001806">
    <property type="component" value="Chromosome"/>
</dbReference>
<dbReference type="GO" id="GO:1990077">
    <property type="term" value="C:primosome complex"/>
    <property type="evidence" value="ECO:0007669"/>
    <property type="project" value="UniProtKB-KW"/>
</dbReference>
<dbReference type="GO" id="GO:0006269">
    <property type="term" value="P:DNA replication, synthesis of primer"/>
    <property type="evidence" value="ECO:0007669"/>
    <property type="project" value="UniProtKB-UniRule"/>
</dbReference>
<dbReference type="Gene3D" id="1.10.8.1180">
    <property type="match status" value="1"/>
</dbReference>
<dbReference type="HAMAP" id="MF_01061">
    <property type="entry name" value="DnaT"/>
    <property type="match status" value="1"/>
</dbReference>
<dbReference type="InterPro" id="IPR020917">
    <property type="entry name" value="DnaT"/>
</dbReference>
<dbReference type="InterPro" id="IPR040480">
    <property type="entry name" value="DnaT_DNA_bind"/>
</dbReference>
<dbReference type="NCBIfam" id="NF002770">
    <property type="entry name" value="PRK02854.1"/>
    <property type="match status" value="1"/>
</dbReference>
<dbReference type="Pfam" id="PF17948">
    <property type="entry name" value="DnaT"/>
    <property type="match status" value="1"/>
</dbReference>
<name>DNAT_BUCAI</name>
<comment type="function">
    <text evidence="1">Involved in the restart of stalled replication forks, which reloads the replicative helicase on sites other than the origin of replication. Can function in multiple replication restart pathways. Displaces ssDNA from a PriB-ssDNA complex. Probably forms a spiral filament on ssDNA.</text>
</comment>
<comment type="subunit">
    <text evidence="1">Homooligomerizes. Interacts with PriB. Component of the replication restart primosome. Primosome assembly occurs via a 'hand-off' mechanism. PriA binds to replication forks, subsequently PriB then DnaT bind; DnaT then displaces ssDNA to generate the helicase loading substrate.</text>
</comment>
<comment type="similarity">
    <text evidence="1">Belongs to the DnaT family.</text>
</comment>
<accession>P57135</accession>
<feature type="chain" id="PRO_0000199867" description="Replication restart protein DnaT">
    <location>
        <begin position="1"/>
        <end position="164"/>
    </location>
</feature>
<gene>
    <name evidence="1" type="primary">dnaT</name>
    <name type="ordered locus">BU022</name>
</gene>
<evidence type="ECO:0000255" key="1">
    <source>
        <dbReference type="HAMAP-Rule" id="MF_01061"/>
    </source>
</evidence>